<keyword id="KW-0131">Cell cycle</keyword>
<keyword id="KW-0132">Cell division</keyword>
<keyword id="KW-0175">Coiled coil</keyword>
<keyword id="KW-0963">Cytoplasm</keyword>
<keyword id="KW-0206">Cytoskeleton</keyword>
<keyword id="KW-0493">Microtubule</keyword>
<keyword id="KW-0498">Mitosis</keyword>
<keyword id="KW-1185">Reference proteome</keyword>
<keyword id="KW-0677">Repeat</keyword>
<keyword id="KW-0813">Transport</keyword>
<keyword id="KW-0853">WD repeat</keyword>
<organism>
    <name type="scientific">Trichoplax adhaerens</name>
    <name type="common">Trichoplax reptans</name>
    <dbReference type="NCBI Taxonomy" id="10228"/>
    <lineage>
        <taxon>Eukaryota</taxon>
        <taxon>Metazoa</taxon>
        <taxon>Placozoa</taxon>
        <taxon>Uniplacotomia</taxon>
        <taxon>Trichoplacea</taxon>
        <taxon>Trichoplacidae</taxon>
        <taxon>Trichoplax</taxon>
    </lineage>
</organism>
<dbReference type="EMBL" id="DS985249">
    <property type="protein sequence ID" value="EDV22638.1"/>
    <property type="molecule type" value="Genomic_DNA"/>
</dbReference>
<dbReference type="RefSeq" id="XP_002115182.1">
    <property type="nucleotide sequence ID" value="XM_002115146.1"/>
</dbReference>
<dbReference type="SMR" id="B3S4I5"/>
<dbReference type="FunCoup" id="B3S4I5">
    <property type="interactions" value="2220"/>
</dbReference>
<dbReference type="STRING" id="10228.B3S4I5"/>
<dbReference type="EnsemblMetazoa" id="TriadT50647">
    <property type="protein sequence ID" value="TriadP50647"/>
    <property type="gene ID" value="TriadG50647"/>
</dbReference>
<dbReference type="GeneID" id="6756231"/>
<dbReference type="KEGG" id="tad:TRIADDRAFT_50647"/>
<dbReference type="CTD" id="6756231"/>
<dbReference type="eggNOG" id="KOG0295">
    <property type="taxonomic scope" value="Eukaryota"/>
</dbReference>
<dbReference type="HOGENOM" id="CLU_000288_57_15_1"/>
<dbReference type="InParanoid" id="B3S4I5"/>
<dbReference type="OMA" id="WHVATKE"/>
<dbReference type="OrthoDB" id="674604at2759"/>
<dbReference type="PhylomeDB" id="B3S4I5"/>
<dbReference type="Proteomes" id="UP000009022">
    <property type="component" value="Unassembled WGS sequence"/>
</dbReference>
<dbReference type="GO" id="GO:0005813">
    <property type="term" value="C:centrosome"/>
    <property type="evidence" value="ECO:0007669"/>
    <property type="project" value="UniProtKB-SubCell"/>
</dbReference>
<dbReference type="GO" id="GO:0005881">
    <property type="term" value="C:cytoplasmic microtubule"/>
    <property type="evidence" value="ECO:0000318"/>
    <property type="project" value="GO_Central"/>
</dbReference>
<dbReference type="GO" id="GO:0000776">
    <property type="term" value="C:kinetochore"/>
    <property type="evidence" value="ECO:0000318"/>
    <property type="project" value="GO_Central"/>
</dbReference>
<dbReference type="GO" id="GO:0005875">
    <property type="term" value="C:microtubule associated complex"/>
    <property type="evidence" value="ECO:0000318"/>
    <property type="project" value="GO_Central"/>
</dbReference>
<dbReference type="GO" id="GO:0005635">
    <property type="term" value="C:nuclear envelope"/>
    <property type="evidence" value="ECO:0000318"/>
    <property type="project" value="GO_Central"/>
</dbReference>
<dbReference type="GO" id="GO:1990234">
    <property type="term" value="C:transferase complex"/>
    <property type="evidence" value="ECO:0007669"/>
    <property type="project" value="UniProtKB-ARBA"/>
</dbReference>
<dbReference type="GO" id="GO:0070840">
    <property type="term" value="F:dynein complex binding"/>
    <property type="evidence" value="ECO:0000318"/>
    <property type="project" value="GO_Central"/>
</dbReference>
<dbReference type="GO" id="GO:0051010">
    <property type="term" value="F:microtubule plus-end binding"/>
    <property type="evidence" value="ECO:0000318"/>
    <property type="project" value="GO_Central"/>
</dbReference>
<dbReference type="GO" id="GO:0051301">
    <property type="term" value="P:cell division"/>
    <property type="evidence" value="ECO:0007669"/>
    <property type="project" value="UniProtKB-KW"/>
</dbReference>
<dbReference type="GO" id="GO:0000132">
    <property type="term" value="P:establishment of mitotic spindle orientation"/>
    <property type="evidence" value="ECO:0000318"/>
    <property type="project" value="GO_Central"/>
</dbReference>
<dbReference type="GO" id="GO:0031023">
    <property type="term" value="P:microtubule organizing center organization"/>
    <property type="evidence" value="ECO:0000318"/>
    <property type="project" value="GO_Central"/>
</dbReference>
<dbReference type="GO" id="GO:0051012">
    <property type="term" value="P:microtubule sliding"/>
    <property type="evidence" value="ECO:0007669"/>
    <property type="project" value="UniProtKB-UniRule"/>
</dbReference>
<dbReference type="GO" id="GO:0007097">
    <property type="term" value="P:nuclear migration"/>
    <property type="evidence" value="ECO:0000318"/>
    <property type="project" value="GO_Central"/>
</dbReference>
<dbReference type="GO" id="GO:0047496">
    <property type="term" value="P:vesicle transport along microtubule"/>
    <property type="evidence" value="ECO:0000318"/>
    <property type="project" value="GO_Central"/>
</dbReference>
<dbReference type="CDD" id="cd00200">
    <property type="entry name" value="WD40"/>
    <property type="match status" value="1"/>
</dbReference>
<dbReference type="FunFam" id="2.130.10.10:FF:000342">
    <property type="entry name" value="Nuclear distribution protein PAC1"/>
    <property type="match status" value="1"/>
</dbReference>
<dbReference type="FunFam" id="1.20.960.30:FF:000002">
    <property type="entry name" value="Platelet-activating factor acetylhydrolase ib"/>
    <property type="match status" value="1"/>
</dbReference>
<dbReference type="Gene3D" id="1.20.960.30">
    <property type="match status" value="1"/>
</dbReference>
<dbReference type="Gene3D" id="2.130.10.10">
    <property type="entry name" value="YVTN repeat-like/Quinoprotein amine dehydrogenase"/>
    <property type="match status" value="1"/>
</dbReference>
<dbReference type="HAMAP" id="MF_03141">
    <property type="entry name" value="lis1"/>
    <property type="match status" value="1"/>
</dbReference>
<dbReference type="InterPro" id="IPR017252">
    <property type="entry name" value="Dynein_regulator_LIS1"/>
</dbReference>
<dbReference type="InterPro" id="IPR020472">
    <property type="entry name" value="G-protein_beta_WD-40_rep"/>
</dbReference>
<dbReference type="InterPro" id="IPR037190">
    <property type="entry name" value="LIS1_N"/>
</dbReference>
<dbReference type="InterPro" id="IPR006594">
    <property type="entry name" value="LisH"/>
</dbReference>
<dbReference type="InterPro" id="IPR056795">
    <property type="entry name" value="PAC1-like_LisH-like_dom"/>
</dbReference>
<dbReference type="InterPro" id="IPR015943">
    <property type="entry name" value="WD40/YVTN_repeat-like_dom_sf"/>
</dbReference>
<dbReference type="InterPro" id="IPR019775">
    <property type="entry name" value="WD40_repeat_CS"/>
</dbReference>
<dbReference type="InterPro" id="IPR036322">
    <property type="entry name" value="WD40_repeat_dom_sf"/>
</dbReference>
<dbReference type="InterPro" id="IPR001680">
    <property type="entry name" value="WD40_rpt"/>
</dbReference>
<dbReference type="PANTHER" id="PTHR22847:SF637">
    <property type="entry name" value="WD REPEAT DOMAIN 5B"/>
    <property type="match status" value="1"/>
</dbReference>
<dbReference type="PANTHER" id="PTHR22847">
    <property type="entry name" value="WD40 REPEAT PROTEIN"/>
    <property type="match status" value="1"/>
</dbReference>
<dbReference type="Pfam" id="PF24951">
    <property type="entry name" value="LisH_PAC1"/>
    <property type="match status" value="1"/>
</dbReference>
<dbReference type="Pfam" id="PF00400">
    <property type="entry name" value="WD40"/>
    <property type="match status" value="7"/>
</dbReference>
<dbReference type="PIRSF" id="PIRSF037647">
    <property type="entry name" value="Dynein_regulator_Lis1"/>
    <property type="match status" value="1"/>
</dbReference>
<dbReference type="PRINTS" id="PR00320">
    <property type="entry name" value="GPROTEINBRPT"/>
</dbReference>
<dbReference type="SMART" id="SM00667">
    <property type="entry name" value="LisH"/>
    <property type="match status" value="1"/>
</dbReference>
<dbReference type="SMART" id="SM00320">
    <property type="entry name" value="WD40"/>
    <property type="match status" value="7"/>
</dbReference>
<dbReference type="SUPFAM" id="SSF109925">
    <property type="entry name" value="Lissencephaly-1 protein (Lis-1, PAF-AH alpha) N-terminal domain"/>
    <property type="match status" value="1"/>
</dbReference>
<dbReference type="SUPFAM" id="SSF50978">
    <property type="entry name" value="WD40 repeat-like"/>
    <property type="match status" value="1"/>
</dbReference>
<dbReference type="PROSITE" id="PS50896">
    <property type="entry name" value="LISH"/>
    <property type="match status" value="1"/>
</dbReference>
<dbReference type="PROSITE" id="PS00678">
    <property type="entry name" value="WD_REPEATS_1"/>
    <property type="match status" value="5"/>
</dbReference>
<dbReference type="PROSITE" id="PS50082">
    <property type="entry name" value="WD_REPEATS_2"/>
    <property type="match status" value="7"/>
</dbReference>
<dbReference type="PROSITE" id="PS50294">
    <property type="entry name" value="WD_REPEATS_REGION"/>
    <property type="match status" value="1"/>
</dbReference>
<gene>
    <name type="ORF">TRIADDRAFT_50647</name>
</gene>
<comment type="function">
    <text evidence="1">Positively regulates the activity of the minus-end directed microtubule motor protein dynein. May enhance dynein-mediated microtubule sliding by targeting dynein to the microtubule plus end. Required for several dynein- and microtubule-dependent processes.</text>
</comment>
<comment type="subcellular location">
    <subcellularLocation>
        <location evidence="1">Cytoplasm</location>
        <location evidence="1">Cytoskeleton</location>
    </subcellularLocation>
    <subcellularLocation>
        <location evidence="1">Cytoplasm</location>
        <location evidence="1">Cytoskeleton</location>
        <location evidence="1">Microtubule organizing center</location>
        <location evidence="1">Centrosome</location>
    </subcellularLocation>
    <text evidence="1">Localizes to the plus end of microtubules and to the centrosome.</text>
</comment>
<comment type="domain">
    <text evidence="1">Dimerization mediated by the LisH domain may be required to activate dynein.</text>
</comment>
<comment type="similarity">
    <text evidence="1">Belongs to the WD repeat LIS1/nudF family.</text>
</comment>
<feature type="chain" id="PRO_0000405114" description="Lissencephaly-1 homolog">
    <location>
        <begin position="1"/>
        <end position="409"/>
    </location>
</feature>
<feature type="domain" description="LisH" evidence="1">
    <location>
        <begin position="7"/>
        <end position="39"/>
    </location>
</feature>
<feature type="repeat" description="WD 1">
    <location>
        <begin position="105"/>
        <end position="146"/>
    </location>
</feature>
<feature type="repeat" description="WD 2">
    <location>
        <begin position="147"/>
        <end position="186"/>
    </location>
</feature>
<feature type="repeat" description="WD 3">
    <location>
        <begin position="189"/>
        <end position="228"/>
    </location>
</feature>
<feature type="repeat" description="WD 4">
    <location>
        <begin position="231"/>
        <end position="270"/>
    </location>
</feature>
<feature type="repeat" description="WD 5">
    <location>
        <begin position="273"/>
        <end position="332"/>
    </location>
</feature>
<feature type="repeat" description="WD 6">
    <location>
        <begin position="335"/>
        <end position="374"/>
    </location>
</feature>
<feature type="repeat" description="WD 7">
    <location>
        <begin position="377"/>
        <end position="409"/>
    </location>
</feature>
<feature type="region of interest" description="Disordered" evidence="2">
    <location>
        <begin position="75"/>
        <end position="105"/>
    </location>
</feature>
<feature type="coiled-coil region" evidence="1">
    <location>
        <begin position="56"/>
        <end position="81"/>
    </location>
</feature>
<feature type="compositionally biased region" description="Polar residues" evidence="2">
    <location>
        <begin position="75"/>
        <end position="92"/>
    </location>
</feature>
<proteinExistence type="inferred from homology"/>
<reference key="1">
    <citation type="journal article" date="2008" name="Nature">
        <title>The Trichoplax genome and the nature of placozoans.</title>
        <authorList>
            <person name="Srivastava M."/>
            <person name="Begovic E."/>
            <person name="Chapman J."/>
            <person name="Putnam N.H."/>
            <person name="Hellsten U."/>
            <person name="Kawashima T."/>
            <person name="Kuo A."/>
            <person name="Mitros T."/>
            <person name="Salamov A."/>
            <person name="Carpenter M.L."/>
            <person name="Signorovitch A.Y."/>
            <person name="Moreno M.A."/>
            <person name="Kamm K."/>
            <person name="Grimwood J."/>
            <person name="Schmutz J."/>
            <person name="Shapiro H."/>
            <person name="Grigoriev I.V."/>
            <person name="Buss L.W."/>
            <person name="Schierwater B."/>
            <person name="Dellaporta S.L."/>
            <person name="Rokhsar D.S."/>
        </authorList>
    </citation>
    <scope>NUCLEOTIDE SEQUENCE [LARGE SCALE GENOMIC DNA]</scope>
    <source>
        <strain>Grell-BS-1999</strain>
    </source>
</reference>
<name>LIS1_TRIAD</name>
<protein>
    <recommendedName>
        <fullName evidence="1">Lissencephaly-1 homolog</fullName>
    </recommendedName>
</protein>
<sequence length="409" mass="46365">MVLSPKQEEELRFAVADYLQSCGYTNALEAFKKDASIPKEIDNKKYSGLLEKKWTSVVRLQKKVMDLELRLNNTTREMNSGVPTRNSRSSNDWIPRPPEKHSLSGHRSPITCVVFHPVYNVMVSSSEDASMKIWDYESGDFERTLRGHTDSVQDLAFDSSGKLLASSSADMTVKIWDFQTFECRMTLRGHDHNVSSVCFLPSGDFLLSSSRDKTIKMWEVATGYCVYNFEGHREWVRRVAVASDGSLMASCSNDQTVRIWSLSSKECKEELRGHEHVVECIKWAPESCNRYINEASGTEVPKGQKSGPFLASGSRDRVIKIWDVTTAVCLFSLVGHDNWVRGLAFHAGGKYLTSASDDKTIKIWELRHKRCSKSLEAHNHFVTTIDFHRSSPFVITGSVDLTIKVWECR</sequence>
<accession>B3S4I5</accession>
<evidence type="ECO:0000255" key="1">
    <source>
        <dbReference type="HAMAP-Rule" id="MF_03141"/>
    </source>
</evidence>
<evidence type="ECO:0000256" key="2">
    <source>
        <dbReference type="SAM" id="MobiDB-lite"/>
    </source>
</evidence>